<evidence type="ECO:0000269" key="1">
    <source>
    </source>
</evidence>
<evidence type="ECO:0000269" key="2">
    <source>
    </source>
</evidence>
<evidence type="ECO:0000305" key="3"/>
<evidence type="ECO:0000305" key="4">
    <source>
    </source>
</evidence>
<gene>
    <name type="primary">ydgT</name>
    <name type="synonym">cnu</name>
    <name type="ordered locus">SL1344_1393</name>
</gene>
<dbReference type="EMBL" id="FQ312003">
    <property type="protein sequence ID" value="CBW17489.1"/>
    <property type="molecule type" value="Genomic_DNA"/>
</dbReference>
<dbReference type="SMR" id="A0A0H3NGF1"/>
<dbReference type="KEGG" id="sey:SL1344_1393"/>
<dbReference type="PATRIC" id="fig|216597.6.peg.1547"/>
<dbReference type="HOGENOM" id="CLU_190629_0_0_6"/>
<dbReference type="Proteomes" id="UP000008962">
    <property type="component" value="Chromosome"/>
</dbReference>
<dbReference type="Gene3D" id="1.20.1280.40">
    <property type="entry name" value="HHA"/>
    <property type="match status" value="1"/>
</dbReference>
<dbReference type="InterPro" id="IPR007985">
    <property type="entry name" value="Hemolysn_expr_modulating_HHA"/>
</dbReference>
<dbReference type="InterPro" id="IPR036666">
    <property type="entry name" value="HHA_sf"/>
</dbReference>
<dbReference type="NCBIfam" id="NF007703">
    <property type="entry name" value="PRK10391.1"/>
    <property type="match status" value="1"/>
</dbReference>
<dbReference type="Pfam" id="PF05321">
    <property type="entry name" value="HHA"/>
    <property type="match status" value="1"/>
</dbReference>
<dbReference type="SUPFAM" id="SSF68989">
    <property type="entry name" value="Hemolysin expression modulating protein HHA"/>
    <property type="match status" value="1"/>
</dbReference>
<proteinExistence type="inferred from homology"/>
<reference key="1">
    <citation type="journal article" date="2012" name="Proc. Natl. Acad. Sci. U.S.A.">
        <title>The transcriptional landscape and small RNAs of Salmonella enterica serovar Typhimurium.</title>
        <authorList>
            <person name="Kroger C."/>
            <person name="Dillon S.C."/>
            <person name="Cameron A.D."/>
            <person name="Papenfort K."/>
            <person name="Sivasankaran S.K."/>
            <person name="Hokamp K."/>
            <person name="Chao Y."/>
            <person name="Sittka A."/>
            <person name="Hebrard M."/>
            <person name="Handler K."/>
            <person name="Colgan A."/>
            <person name="Leekitcharoenphon P."/>
            <person name="Langridge G.C."/>
            <person name="Lohan A.J."/>
            <person name="Loftus B."/>
            <person name="Lucchini S."/>
            <person name="Ussery D.W."/>
            <person name="Dorman C.J."/>
            <person name="Thomson N.R."/>
            <person name="Vogel J."/>
            <person name="Hinton J.C."/>
        </authorList>
    </citation>
    <scope>NUCLEOTIDE SEQUENCE [LARGE SCALE GENOMIC DNA]</scope>
    <source>
        <strain>SL1344</strain>
    </source>
</reference>
<reference key="2">
    <citation type="journal article" date="2007" name="J. Bacteriol.">
        <title>Repression of intracellular virulence factors in Salmonella by the Hha and YdgT nucleoid-associated proteins.</title>
        <authorList>
            <person name="Silphaduang U."/>
            <person name="Mascarenhas M."/>
            <person name="Karmali M."/>
            <person name="Coombes B.K."/>
        </authorList>
    </citation>
    <scope>FUNCTION</scope>
    <scope>DISRUPTION PHENOTYPE</scope>
    <source>
        <strain>SL1344</strain>
    </source>
</reference>
<reference key="3">
    <citation type="journal article" date="2009" name="PLoS Genet.">
        <title>Differential regulation of horizontally acquired and core genome genes by the bacterial modulator H-NS.</title>
        <authorList>
            <person name="Banos R.C."/>
            <person name="Vivero A."/>
            <person name="Aznar S."/>
            <person name="Garcia J."/>
            <person name="Pons M."/>
            <person name="Madrid C."/>
            <person name="Juarez A."/>
        </authorList>
    </citation>
    <scope>FUNCTION</scope>
    <scope>DISRUPTION PHENOTYPE</scope>
    <source>
        <strain>SL1344 / SV5015</strain>
    </source>
</reference>
<organism>
    <name type="scientific">Salmonella typhimurium (strain SL1344)</name>
    <dbReference type="NCBI Taxonomy" id="216597"/>
    <lineage>
        <taxon>Bacteria</taxon>
        <taxon>Pseudomonadati</taxon>
        <taxon>Pseudomonadota</taxon>
        <taxon>Gammaproteobacteria</taxon>
        <taxon>Enterobacterales</taxon>
        <taxon>Enterobacteriaceae</taxon>
        <taxon>Salmonella</taxon>
    </lineage>
</organism>
<protein>
    <recommendedName>
        <fullName>Transcription modulator YdgT</fullName>
    </recommendedName>
    <alternativeName>
        <fullName>H-NS/StpA-binding protein 2</fullName>
    </alternativeName>
    <alternativeName>
        <fullName>OriC-binding nucleoid-associated protein</fullName>
    </alternativeName>
</protein>
<sequence>MDQLYMTVQDYLLKFRKISSLESLEKLFDHLNYTLTDDMDIVNMYRAADHRRAELVSGGRLFDVGQVPQSVWRYVQ</sequence>
<feature type="chain" id="PRO_0000436900" description="Transcription modulator YdgT">
    <location>
        <begin position="1"/>
        <end position="76"/>
    </location>
</feature>
<name>YDGT_SALTS</name>
<accession>A0A0H3NGF1</accession>
<keyword id="KW-0804">Transcription</keyword>
<keyword id="KW-0805">Transcription regulation</keyword>
<keyword id="KW-0843">Virulence</keyword>
<comment type="function">
    <text evidence="4">Binds to H-NS and modifies the range of genes it silences; H-NS alone silences 'core' genes while the H-NS-Hha complex (and presumably also H-NS-YdgT) silences genes acquired by horizontal gene transfer (PubMed:19521501). Plays a role silencing virulence factors in the absence of factors that induce pathogenicity (PubMed:17307861).</text>
</comment>
<comment type="disruption phenotype">
    <text evidence="1 2">No effect on expression of pathogenicity island 2 (SPI-2) which is usually repressed in culture; derepression of SPI-2 in double hha-ydgT deletions (PubMed:17307861). Double hha-ydgT deletion mutants lead to deregulation of many genes at least 2-fold, most of which are also deregulated in an hns deletion, suggesting there are a large number of hns-regulated genes whose expression is also modulated by Hha and/or YdgT (PubMed:19521501). Upon infection of C57BL/6 mice a single hha mutant has 10-100-fold reduced virulence compared to wild-type, while a double hha-ydgT deletion is 6 orders of magnitude less virulent (PubMed:17307861).</text>
</comment>
<comment type="similarity">
    <text evidence="3">Belongs to the Hha/YmoA/Cnu family.</text>
</comment>